<accession>O30300</accession>
<organism>
    <name type="scientific">Archaeoglobus fulgidus (strain ATCC 49558 / DSM 4304 / JCM 9628 / NBRC 100126 / VC-16)</name>
    <dbReference type="NCBI Taxonomy" id="224325"/>
    <lineage>
        <taxon>Archaea</taxon>
        <taxon>Methanobacteriati</taxon>
        <taxon>Methanobacteriota</taxon>
        <taxon>Archaeoglobi</taxon>
        <taxon>Archaeoglobales</taxon>
        <taxon>Archaeoglobaceae</taxon>
        <taxon>Archaeoglobus</taxon>
    </lineage>
</organism>
<proteinExistence type="inferred from homology"/>
<comment type="similarity">
    <text evidence="2">Belongs to the UPF0148 family.</text>
</comment>
<comment type="sequence caution" evidence="2">
    <conflict type="erroneous initiation">
        <sequence resource="EMBL-CDS" id="AAB91289"/>
    </conflict>
</comment>
<gene>
    <name type="ordered locus">AF_2370</name>
</gene>
<evidence type="ECO:0000256" key="1">
    <source>
        <dbReference type="SAM" id="MobiDB-lite"/>
    </source>
</evidence>
<evidence type="ECO:0000305" key="2"/>
<sequence>MEIVSDKKISEKGIASAAELLYKGAKMLAHSCPECKMPLFEKDGKIFCPSCGREVVIEEDSAAKAESEEKPPESTKPAVKADYDEAVEKIEMAISKVCDMMVESRSVEEVRVLSDSLEKLVDALKKLRE</sequence>
<feature type="chain" id="PRO_0000159855" description="UPF0148 protein AF_2370">
    <location>
        <begin position="1"/>
        <end position="129"/>
    </location>
</feature>
<feature type="region of interest" description="Disordered" evidence="1">
    <location>
        <begin position="61"/>
        <end position="80"/>
    </location>
</feature>
<name>Y2370_ARCFU</name>
<protein>
    <recommendedName>
        <fullName>UPF0148 protein AF_2370</fullName>
    </recommendedName>
</protein>
<reference key="1">
    <citation type="journal article" date="1997" name="Nature">
        <title>The complete genome sequence of the hyperthermophilic, sulphate-reducing archaeon Archaeoglobus fulgidus.</title>
        <authorList>
            <person name="Klenk H.-P."/>
            <person name="Clayton R.A."/>
            <person name="Tomb J.-F."/>
            <person name="White O."/>
            <person name="Nelson K.E."/>
            <person name="Ketchum K.A."/>
            <person name="Dodson R.J."/>
            <person name="Gwinn M.L."/>
            <person name="Hickey E.K."/>
            <person name="Peterson J.D."/>
            <person name="Richardson D.L."/>
            <person name="Kerlavage A.R."/>
            <person name="Graham D.E."/>
            <person name="Kyrpides N.C."/>
            <person name="Fleischmann R.D."/>
            <person name="Quackenbush J."/>
            <person name="Lee N.H."/>
            <person name="Sutton G.G."/>
            <person name="Gill S.R."/>
            <person name="Kirkness E.F."/>
            <person name="Dougherty B.A."/>
            <person name="McKenney K."/>
            <person name="Adams M.D."/>
            <person name="Loftus B.J."/>
            <person name="Peterson S.N."/>
            <person name="Reich C.I."/>
            <person name="McNeil L.K."/>
            <person name="Badger J.H."/>
            <person name="Glodek A."/>
            <person name="Zhou L."/>
            <person name="Overbeek R."/>
            <person name="Gocayne J.D."/>
            <person name="Weidman J.F."/>
            <person name="McDonald L.A."/>
            <person name="Utterback T.R."/>
            <person name="Cotton M.D."/>
            <person name="Spriggs T."/>
            <person name="Artiach P."/>
            <person name="Kaine B.P."/>
            <person name="Sykes S.M."/>
            <person name="Sadow P.W."/>
            <person name="D'Andrea K.P."/>
            <person name="Bowman C."/>
            <person name="Fujii C."/>
            <person name="Garland S.A."/>
            <person name="Mason T.M."/>
            <person name="Olsen G.J."/>
            <person name="Fraser C.M."/>
            <person name="Smith H.O."/>
            <person name="Woese C.R."/>
            <person name="Venter J.C."/>
        </authorList>
    </citation>
    <scope>NUCLEOTIDE SEQUENCE [LARGE SCALE GENOMIC DNA]</scope>
    <source>
        <strain>ATCC 49558 / DSM 4304 / JCM 9628 / NBRC 100126 / VC-16</strain>
    </source>
</reference>
<dbReference type="EMBL" id="AE000782">
    <property type="protein sequence ID" value="AAB91289.1"/>
    <property type="status" value="ALT_INIT"/>
    <property type="molecule type" value="Genomic_DNA"/>
</dbReference>
<dbReference type="PIR" id="B69546">
    <property type="entry name" value="B69546"/>
</dbReference>
<dbReference type="SMR" id="O30300"/>
<dbReference type="STRING" id="224325.AF_2370"/>
<dbReference type="PaxDb" id="224325-AF_2370"/>
<dbReference type="EnsemblBacteria" id="AAB91289">
    <property type="protein sequence ID" value="AAB91289"/>
    <property type="gene ID" value="AF_2370"/>
</dbReference>
<dbReference type="KEGG" id="afu:AF_2370"/>
<dbReference type="eggNOG" id="arCOG00578">
    <property type="taxonomic scope" value="Archaea"/>
</dbReference>
<dbReference type="HOGENOM" id="CLU_1357844_0_0_2"/>
<dbReference type="Proteomes" id="UP000002199">
    <property type="component" value="Chromosome"/>
</dbReference>
<dbReference type="HAMAP" id="MF_00343">
    <property type="entry name" value="UPF0148"/>
    <property type="match status" value="1"/>
</dbReference>
<dbReference type="InterPro" id="IPR009563">
    <property type="entry name" value="SSSCA1"/>
</dbReference>
<dbReference type="InterPro" id="IPR022954">
    <property type="entry name" value="UPF0148"/>
</dbReference>
<dbReference type="InterPro" id="IPR051888">
    <property type="entry name" value="UPF0148_domain"/>
</dbReference>
<dbReference type="PANTHER" id="PTHR16537:SF1">
    <property type="entry name" value="PROTEIN ZNRD2"/>
    <property type="match status" value="1"/>
</dbReference>
<dbReference type="PANTHER" id="PTHR16537">
    <property type="entry name" value="SJOEGREN SYNDROME/SCLERODERMA AUTOANTIGEN 1"/>
    <property type="match status" value="1"/>
</dbReference>
<dbReference type="Pfam" id="PF06677">
    <property type="entry name" value="Auto_anti-p27"/>
    <property type="match status" value="1"/>
</dbReference>
<keyword id="KW-1185">Reference proteome</keyword>